<name>FRSA_PHOPR</name>
<evidence type="ECO:0000255" key="1">
    <source>
        <dbReference type="HAMAP-Rule" id="MF_01063"/>
    </source>
</evidence>
<comment type="function">
    <text evidence="1">Catalyzes the hydrolysis of esters.</text>
</comment>
<comment type="catalytic activity">
    <reaction evidence="1">
        <text>a carboxylic ester + H2O = an alcohol + a carboxylate + H(+)</text>
        <dbReference type="Rhea" id="RHEA:21164"/>
        <dbReference type="ChEBI" id="CHEBI:15377"/>
        <dbReference type="ChEBI" id="CHEBI:15378"/>
        <dbReference type="ChEBI" id="CHEBI:29067"/>
        <dbReference type="ChEBI" id="CHEBI:30879"/>
        <dbReference type="ChEBI" id="CHEBI:33308"/>
        <dbReference type="EC" id="3.1.1.1"/>
    </reaction>
</comment>
<comment type="similarity">
    <text evidence="1">Belongs to the FrsA family.</text>
</comment>
<protein>
    <recommendedName>
        <fullName evidence="1">Esterase FrsA</fullName>
        <ecNumber evidence="1">3.1.1.1</ecNumber>
    </recommendedName>
</protein>
<gene>
    <name evidence="1" type="primary">frsA</name>
    <name type="ordered locus">PBPRA0837</name>
</gene>
<accession>Q6LTX5</accession>
<keyword id="KW-0378">Hydrolase</keyword>
<keyword id="KW-1185">Reference proteome</keyword>
<keyword id="KW-0719">Serine esterase</keyword>
<organism>
    <name type="scientific">Photobacterium profundum (strain SS9)</name>
    <dbReference type="NCBI Taxonomy" id="298386"/>
    <lineage>
        <taxon>Bacteria</taxon>
        <taxon>Pseudomonadati</taxon>
        <taxon>Pseudomonadota</taxon>
        <taxon>Gammaproteobacteria</taxon>
        <taxon>Vibrionales</taxon>
        <taxon>Vibrionaceae</taxon>
        <taxon>Photobacterium</taxon>
    </lineage>
</organism>
<dbReference type="EC" id="3.1.1.1" evidence="1"/>
<dbReference type="EMBL" id="CR378665">
    <property type="protein sequence ID" value="CAG19250.1"/>
    <property type="molecule type" value="Genomic_DNA"/>
</dbReference>
<dbReference type="RefSeq" id="WP_011217587.1">
    <property type="nucleotide sequence ID" value="NC_006370.1"/>
</dbReference>
<dbReference type="SMR" id="Q6LTX5"/>
<dbReference type="STRING" id="298386.PBPRA0837"/>
<dbReference type="ESTHER" id="phopr-y837">
    <property type="family name" value="Duf_1100-R"/>
</dbReference>
<dbReference type="KEGG" id="ppr:PBPRA0837"/>
<dbReference type="eggNOG" id="COG1073">
    <property type="taxonomic scope" value="Bacteria"/>
</dbReference>
<dbReference type="HOGENOM" id="CLU_036819_0_0_6"/>
<dbReference type="Proteomes" id="UP000000593">
    <property type="component" value="Chromosome 1"/>
</dbReference>
<dbReference type="GO" id="GO:0106435">
    <property type="term" value="F:carboxylesterase activity"/>
    <property type="evidence" value="ECO:0007669"/>
    <property type="project" value="UniProtKB-EC"/>
</dbReference>
<dbReference type="Gene3D" id="3.40.50.1820">
    <property type="entry name" value="alpha/beta hydrolase"/>
    <property type="match status" value="1"/>
</dbReference>
<dbReference type="HAMAP" id="MF_01063">
    <property type="entry name" value="FrsA"/>
    <property type="match status" value="1"/>
</dbReference>
<dbReference type="InterPro" id="IPR029058">
    <property type="entry name" value="AB_hydrolase_fold"/>
</dbReference>
<dbReference type="InterPro" id="IPR043423">
    <property type="entry name" value="FrsA"/>
</dbReference>
<dbReference type="InterPro" id="IPR010520">
    <property type="entry name" value="FrsA-like"/>
</dbReference>
<dbReference type="InterPro" id="IPR050261">
    <property type="entry name" value="FrsA_esterase"/>
</dbReference>
<dbReference type="NCBIfam" id="NF003460">
    <property type="entry name" value="PRK05077.1"/>
    <property type="match status" value="1"/>
</dbReference>
<dbReference type="PANTHER" id="PTHR22946">
    <property type="entry name" value="DIENELACTONE HYDROLASE DOMAIN-CONTAINING PROTEIN-RELATED"/>
    <property type="match status" value="1"/>
</dbReference>
<dbReference type="PANTHER" id="PTHR22946:SF4">
    <property type="entry name" value="ESTERASE FRSA"/>
    <property type="match status" value="1"/>
</dbReference>
<dbReference type="Pfam" id="PF06500">
    <property type="entry name" value="FrsA-like"/>
    <property type="match status" value="1"/>
</dbReference>
<dbReference type="SUPFAM" id="SSF53474">
    <property type="entry name" value="alpha/beta-Hydrolases"/>
    <property type="match status" value="1"/>
</dbReference>
<proteinExistence type="inferred from homology"/>
<sequence length="419" mass="46776">MSDTSKTNLSEQLFAPRMNTKETSNLVKIANLKSASVHNALDGDSESGWYRVLRRPQWIWQGIDPIEMEAILSRMASSTATRTSDELLDTVIGYKPGNWIYEWTQVGAKLQKKARAYVEAGQKEKAADTLLKASMYYSVAAYPHLKGDTLAAQAEIQANQSYRESMALTPHQIRTIDVKYEGKTFQAFIHLPRTDKLLPTVIVSGGLDSLQSDLWRLYRDYFGPAGFAMVTLDMPSVGHSSRWALTEDTSRLHQALVQQIRDVPWVDNTKVAMLGLRFGANAAIRLGFMEPTRLKTCISLGGAIHSMLTQPTMLDSMPRMYLDVIASRMGKHGVSKSSLTSHLPAWSLKNQGLLGRRKVDVPMLGISLKNDPVCREIDNQLIEKSSRGGKAITLPDTPLHDGYHRSMVTVIEWLKDKLA</sequence>
<reference key="1">
    <citation type="journal article" date="2005" name="Science">
        <title>Life at depth: Photobacterium profundum genome sequence and expression analysis.</title>
        <authorList>
            <person name="Vezzi A."/>
            <person name="Campanaro S."/>
            <person name="D'Angelo M."/>
            <person name="Simonato F."/>
            <person name="Vitulo N."/>
            <person name="Lauro F.M."/>
            <person name="Cestaro A."/>
            <person name="Malacrida G."/>
            <person name="Simionati B."/>
            <person name="Cannata N."/>
            <person name="Romualdi C."/>
            <person name="Bartlett D.H."/>
            <person name="Valle G."/>
        </authorList>
    </citation>
    <scope>NUCLEOTIDE SEQUENCE [LARGE SCALE GENOMIC DNA]</scope>
    <source>
        <strain>ATCC BAA-1253 / SS9</strain>
    </source>
</reference>
<feature type="chain" id="PRO_0000197155" description="Esterase FrsA">
    <location>
        <begin position="1"/>
        <end position="419"/>
    </location>
</feature>